<protein>
    <recommendedName>
        <fullName evidence="1">Protein GrpE</fullName>
    </recommendedName>
    <alternativeName>
        <fullName evidence="1">HSP-70 cofactor</fullName>
    </alternativeName>
</protein>
<accession>Q9CNU1</accession>
<gene>
    <name evidence="1" type="primary">grpE</name>
    <name type="ordered locus">PM0334</name>
</gene>
<dbReference type="EMBL" id="AE004439">
    <property type="protein sequence ID" value="AAK02418.1"/>
    <property type="status" value="ALT_INIT"/>
    <property type="molecule type" value="Genomic_DNA"/>
</dbReference>
<dbReference type="RefSeq" id="WP_005721422.1">
    <property type="nucleotide sequence ID" value="NC_002663.1"/>
</dbReference>
<dbReference type="SMR" id="Q9CNU1"/>
<dbReference type="STRING" id="272843.PM0334"/>
<dbReference type="EnsemblBacteria" id="AAK02418">
    <property type="protein sequence ID" value="AAK02418"/>
    <property type="gene ID" value="PM0334"/>
</dbReference>
<dbReference type="GeneID" id="77206179"/>
<dbReference type="KEGG" id="pmu:PM0334"/>
<dbReference type="HOGENOM" id="CLU_057217_6_0_6"/>
<dbReference type="OrthoDB" id="9789811at2"/>
<dbReference type="Proteomes" id="UP000000809">
    <property type="component" value="Chromosome"/>
</dbReference>
<dbReference type="GO" id="GO:0005829">
    <property type="term" value="C:cytosol"/>
    <property type="evidence" value="ECO:0007669"/>
    <property type="project" value="TreeGrafter"/>
</dbReference>
<dbReference type="GO" id="GO:0000774">
    <property type="term" value="F:adenyl-nucleotide exchange factor activity"/>
    <property type="evidence" value="ECO:0007669"/>
    <property type="project" value="InterPro"/>
</dbReference>
<dbReference type="GO" id="GO:0042803">
    <property type="term" value="F:protein homodimerization activity"/>
    <property type="evidence" value="ECO:0007669"/>
    <property type="project" value="InterPro"/>
</dbReference>
<dbReference type="GO" id="GO:0051087">
    <property type="term" value="F:protein-folding chaperone binding"/>
    <property type="evidence" value="ECO:0007669"/>
    <property type="project" value="InterPro"/>
</dbReference>
<dbReference type="GO" id="GO:0051082">
    <property type="term" value="F:unfolded protein binding"/>
    <property type="evidence" value="ECO:0007669"/>
    <property type="project" value="TreeGrafter"/>
</dbReference>
<dbReference type="GO" id="GO:0006457">
    <property type="term" value="P:protein folding"/>
    <property type="evidence" value="ECO:0007669"/>
    <property type="project" value="InterPro"/>
</dbReference>
<dbReference type="CDD" id="cd00446">
    <property type="entry name" value="GrpE"/>
    <property type="match status" value="1"/>
</dbReference>
<dbReference type="FunFam" id="2.30.22.10:FF:000001">
    <property type="entry name" value="Protein GrpE"/>
    <property type="match status" value="1"/>
</dbReference>
<dbReference type="Gene3D" id="3.90.20.20">
    <property type="match status" value="1"/>
</dbReference>
<dbReference type="Gene3D" id="2.30.22.10">
    <property type="entry name" value="Head domain of nucleotide exchange factor GrpE"/>
    <property type="match status" value="1"/>
</dbReference>
<dbReference type="HAMAP" id="MF_01151">
    <property type="entry name" value="GrpE"/>
    <property type="match status" value="1"/>
</dbReference>
<dbReference type="InterPro" id="IPR000740">
    <property type="entry name" value="GrpE"/>
</dbReference>
<dbReference type="InterPro" id="IPR013805">
    <property type="entry name" value="GrpE_coiled_coil"/>
</dbReference>
<dbReference type="InterPro" id="IPR009012">
    <property type="entry name" value="GrpE_head"/>
</dbReference>
<dbReference type="NCBIfam" id="NF010738">
    <property type="entry name" value="PRK14140.1"/>
    <property type="match status" value="1"/>
</dbReference>
<dbReference type="NCBIfam" id="NF010748">
    <property type="entry name" value="PRK14150.1"/>
    <property type="match status" value="1"/>
</dbReference>
<dbReference type="PANTHER" id="PTHR21237">
    <property type="entry name" value="GRPE PROTEIN"/>
    <property type="match status" value="1"/>
</dbReference>
<dbReference type="PANTHER" id="PTHR21237:SF23">
    <property type="entry name" value="GRPE PROTEIN HOMOLOG, MITOCHONDRIAL"/>
    <property type="match status" value="1"/>
</dbReference>
<dbReference type="Pfam" id="PF01025">
    <property type="entry name" value="GrpE"/>
    <property type="match status" value="1"/>
</dbReference>
<dbReference type="PRINTS" id="PR00773">
    <property type="entry name" value="GRPEPROTEIN"/>
</dbReference>
<dbReference type="SUPFAM" id="SSF58014">
    <property type="entry name" value="Coiled-coil domain of nucleotide exchange factor GrpE"/>
    <property type="match status" value="1"/>
</dbReference>
<dbReference type="SUPFAM" id="SSF51064">
    <property type="entry name" value="Head domain of nucleotide exchange factor GrpE"/>
    <property type="match status" value="1"/>
</dbReference>
<dbReference type="PROSITE" id="PS01071">
    <property type="entry name" value="GRPE"/>
    <property type="match status" value="1"/>
</dbReference>
<reference key="1">
    <citation type="journal article" date="2001" name="Proc. Natl. Acad. Sci. U.S.A.">
        <title>Complete genomic sequence of Pasteurella multocida Pm70.</title>
        <authorList>
            <person name="May B.J."/>
            <person name="Zhang Q."/>
            <person name="Li L.L."/>
            <person name="Paustian M.L."/>
            <person name="Whittam T.S."/>
            <person name="Kapur V."/>
        </authorList>
    </citation>
    <scope>NUCLEOTIDE SEQUENCE [LARGE SCALE GENOMIC DNA]</scope>
    <source>
        <strain>Pm70</strain>
    </source>
</reference>
<feature type="chain" id="PRO_0000113831" description="Protein GrpE">
    <location>
        <begin position="1"/>
        <end position="197"/>
    </location>
</feature>
<feature type="region of interest" description="Disordered" evidence="2">
    <location>
        <begin position="1"/>
        <end position="34"/>
    </location>
</feature>
<feature type="compositionally biased region" description="Basic and acidic residues" evidence="2">
    <location>
        <begin position="1"/>
        <end position="27"/>
    </location>
</feature>
<organism>
    <name type="scientific">Pasteurella multocida (strain Pm70)</name>
    <dbReference type="NCBI Taxonomy" id="272843"/>
    <lineage>
        <taxon>Bacteria</taxon>
        <taxon>Pseudomonadati</taxon>
        <taxon>Pseudomonadota</taxon>
        <taxon>Gammaproteobacteria</taxon>
        <taxon>Pasteurellales</taxon>
        <taxon>Pasteurellaceae</taxon>
        <taxon>Pasteurella</taxon>
    </lineage>
</organism>
<evidence type="ECO:0000255" key="1">
    <source>
        <dbReference type="HAMAP-Rule" id="MF_01151"/>
    </source>
</evidence>
<evidence type="ECO:0000256" key="2">
    <source>
        <dbReference type="SAM" id="MobiDB-lite"/>
    </source>
</evidence>
<evidence type="ECO:0000305" key="3"/>
<keyword id="KW-0143">Chaperone</keyword>
<keyword id="KW-0963">Cytoplasm</keyword>
<keyword id="KW-1185">Reference proteome</keyword>
<keyword id="KW-0346">Stress response</keyword>
<proteinExistence type="inferred from homology"/>
<sequence>MSNKEQHIEKEEQLQEEKHEEQQKTEETEVEAVNGVDPLEEAILRVQELEAQLTEMVKKEQDFLLRSRAEMDNIRRRAEQDVEKAHKFGLEKFSKDILNTIDNLERALATPANLEDESIKSLFDGVELTLKELLATVSRFGVEAVGVVGETFNPEVHQAISMQPMEGFETNQITVVLQKGYLLNGRVIRPAMVMVAA</sequence>
<name>GRPE_PASMU</name>
<comment type="function">
    <text evidence="1">Participates actively in the response to hyperosmotic and heat shock by preventing the aggregation of stress-denatured proteins, in association with DnaK and GrpE. It is the nucleotide exchange factor for DnaK and may function as a thermosensor. Unfolded proteins bind initially to DnaJ; upon interaction with the DnaJ-bound protein, DnaK hydrolyzes its bound ATP, resulting in the formation of a stable complex. GrpE releases ADP from DnaK; ATP binding to DnaK triggers the release of the substrate protein, thus completing the reaction cycle. Several rounds of ATP-dependent interactions between DnaJ, DnaK and GrpE are required for fully efficient folding.</text>
</comment>
<comment type="subunit">
    <text evidence="1">Homodimer.</text>
</comment>
<comment type="subcellular location">
    <subcellularLocation>
        <location evidence="1">Cytoplasm</location>
    </subcellularLocation>
</comment>
<comment type="similarity">
    <text evidence="1">Belongs to the GrpE family.</text>
</comment>
<comment type="sequence caution" evidence="3">
    <conflict type="erroneous initiation">
        <sequence resource="EMBL-CDS" id="AAK02418"/>
    </conflict>
</comment>